<reference key="1">
    <citation type="journal article" date="2000" name="Nature">
        <title>Complete genome sequence of Pseudomonas aeruginosa PAO1, an opportunistic pathogen.</title>
        <authorList>
            <person name="Stover C.K."/>
            <person name="Pham X.-Q.T."/>
            <person name="Erwin A.L."/>
            <person name="Mizoguchi S.D."/>
            <person name="Warrener P."/>
            <person name="Hickey M.J."/>
            <person name="Brinkman F.S.L."/>
            <person name="Hufnagle W.O."/>
            <person name="Kowalik D.J."/>
            <person name="Lagrou M."/>
            <person name="Garber R.L."/>
            <person name="Goltry L."/>
            <person name="Tolentino E."/>
            <person name="Westbrock-Wadman S."/>
            <person name="Yuan Y."/>
            <person name="Brody L.L."/>
            <person name="Coulter S.N."/>
            <person name="Folger K.R."/>
            <person name="Kas A."/>
            <person name="Larbig K."/>
            <person name="Lim R.M."/>
            <person name="Smith K.A."/>
            <person name="Spencer D.H."/>
            <person name="Wong G.K.-S."/>
            <person name="Wu Z."/>
            <person name="Paulsen I.T."/>
            <person name="Reizer J."/>
            <person name="Saier M.H. Jr."/>
            <person name="Hancock R.E.W."/>
            <person name="Lory S."/>
            <person name="Olson M.V."/>
        </authorList>
    </citation>
    <scope>NUCLEOTIDE SEQUENCE [LARGE SCALE GENOMIC DNA]</scope>
    <source>
        <strain>ATCC 15692 / DSM 22644 / CIP 104116 / JCM 14847 / LMG 12228 / 1C / PRS 101 / PAO1</strain>
    </source>
</reference>
<gene>
    <name type="primary">opgG</name>
    <name type="ordered locus">PA5078</name>
</gene>
<evidence type="ECO:0000250" key="1"/>
<evidence type="ECO:0000255" key="2"/>
<evidence type="ECO:0000305" key="3"/>
<sequence>MIFRSVSNTDFRARVRTLLLAGSTALAFVAAPVWAFSIDDVASKAKDLAGDKYSAPTSNLPSEFSEMKFADYQQIRFINERAYWGKLKTPFKLSFYHQGMHFDTPVKINEVTATTVKPIKYDRTKFDFGSLKFDENATKDLGYAGFRVLYPINKADKQDEIATFLGASYFRVVGKGQVYGLSARGLAIDTALPSGEEFPRFREFWIERPKAQDKQLVIYALLDSPRATGAYRFVLRPGKDAVMDVQARVFLRDKVSKLGLAPLTSMYLFGSNQPSEQHNFRPELHDSSGLQIHAGNGEWLWRPLNNPKHLSVSTFSVENPKGFGLLQRGREFSRYEDLDDRYDLRPSAWIEPKGDWGKGTVELVEIPTPDETNDNIVAFWNPETQPEVGKPLDFAYRLHWTMDEDELHDPKSSWVKQTMRSVGDVKQKNLIRQQDGSTALVVDFEGPALKDLAPDAPVTTQVSTDSNAEVVENSLRYNPVLKGWRLTLRIKVKDPKKPVEMRAALVDEAQKPLSETWSYQLPADE</sequence>
<protein>
    <recommendedName>
        <fullName>Glucans biosynthesis protein G</fullName>
    </recommendedName>
</protein>
<keyword id="KW-0574">Periplasm</keyword>
<keyword id="KW-1185">Reference proteome</keyword>
<keyword id="KW-0732">Signal</keyword>
<organism>
    <name type="scientific">Pseudomonas aeruginosa (strain ATCC 15692 / DSM 22644 / CIP 104116 / JCM 14847 / LMG 12228 / 1C / PRS 101 / PAO1)</name>
    <dbReference type="NCBI Taxonomy" id="208964"/>
    <lineage>
        <taxon>Bacteria</taxon>
        <taxon>Pseudomonadati</taxon>
        <taxon>Pseudomonadota</taxon>
        <taxon>Gammaproteobacteria</taxon>
        <taxon>Pseudomonadales</taxon>
        <taxon>Pseudomonadaceae</taxon>
        <taxon>Pseudomonas</taxon>
    </lineage>
</organism>
<comment type="function">
    <text evidence="1">Involved in the biosynthesis of osmoregulated periplasmic glucans (OPGs).</text>
</comment>
<comment type="pathway">
    <text>Glycan metabolism; osmoregulated periplasmic glucan (OPG) biosynthesis.</text>
</comment>
<comment type="subcellular location">
    <subcellularLocation>
        <location evidence="1">Periplasm</location>
    </subcellularLocation>
</comment>
<comment type="similarity">
    <text evidence="3">Belongs to the OpgD/OpgG family.</text>
</comment>
<dbReference type="EMBL" id="AE004091">
    <property type="protein sequence ID" value="AAG08463.1"/>
    <property type="molecule type" value="Genomic_DNA"/>
</dbReference>
<dbReference type="PIR" id="A83013">
    <property type="entry name" value="A83013"/>
</dbReference>
<dbReference type="RefSeq" id="NP_253765.1">
    <property type="nucleotide sequence ID" value="NC_002516.2"/>
</dbReference>
<dbReference type="RefSeq" id="WP_003095915.1">
    <property type="nucleotide sequence ID" value="NZ_QZGE01000002.1"/>
</dbReference>
<dbReference type="SMR" id="Q9HUA5"/>
<dbReference type="FunCoup" id="Q9HUA5">
    <property type="interactions" value="81"/>
</dbReference>
<dbReference type="STRING" id="208964.PA5078"/>
<dbReference type="PaxDb" id="208964-PA5078"/>
<dbReference type="GeneID" id="879629"/>
<dbReference type="KEGG" id="pae:PA5078"/>
<dbReference type="PATRIC" id="fig|208964.12.peg.5323"/>
<dbReference type="PseudoCAP" id="PA5078"/>
<dbReference type="HOGENOM" id="CLU_023403_2_0_6"/>
<dbReference type="InParanoid" id="Q9HUA5"/>
<dbReference type="OrthoDB" id="335750at2"/>
<dbReference type="PhylomeDB" id="Q9HUA5"/>
<dbReference type="BioCyc" id="PAER208964:G1FZ6-5194-MONOMER"/>
<dbReference type="UniPathway" id="UPA00637"/>
<dbReference type="Proteomes" id="UP000002438">
    <property type="component" value="Chromosome"/>
</dbReference>
<dbReference type="GO" id="GO:0030288">
    <property type="term" value="C:outer membrane-bounded periplasmic space"/>
    <property type="evidence" value="ECO:0000318"/>
    <property type="project" value="GO_Central"/>
</dbReference>
<dbReference type="GO" id="GO:0030246">
    <property type="term" value="F:carbohydrate binding"/>
    <property type="evidence" value="ECO:0007669"/>
    <property type="project" value="InterPro"/>
</dbReference>
<dbReference type="GO" id="GO:0003824">
    <property type="term" value="F:catalytic activity"/>
    <property type="evidence" value="ECO:0007669"/>
    <property type="project" value="InterPro"/>
</dbReference>
<dbReference type="GO" id="GO:0051274">
    <property type="term" value="P:beta-glucan biosynthetic process"/>
    <property type="evidence" value="ECO:0000318"/>
    <property type="project" value="GO_Central"/>
</dbReference>
<dbReference type="FunFam" id="2.70.98.10:FF:000001">
    <property type="entry name" value="Glucans biosynthesis protein G"/>
    <property type="match status" value="1"/>
</dbReference>
<dbReference type="Gene3D" id="2.70.98.10">
    <property type="match status" value="1"/>
</dbReference>
<dbReference type="Gene3D" id="2.60.40.10">
    <property type="entry name" value="Immunoglobulins"/>
    <property type="match status" value="1"/>
</dbReference>
<dbReference type="HAMAP" id="MF_01069">
    <property type="entry name" value="MdoG_OpgG"/>
    <property type="match status" value="1"/>
</dbReference>
<dbReference type="InterPro" id="IPR011013">
    <property type="entry name" value="Gal_mutarotase_sf_dom"/>
</dbReference>
<dbReference type="InterPro" id="IPR014718">
    <property type="entry name" value="GH-type_carb-bd"/>
</dbReference>
<dbReference type="InterPro" id="IPR014438">
    <property type="entry name" value="Glucan_biosyn_MdoG/MdoD"/>
</dbReference>
<dbReference type="InterPro" id="IPR007444">
    <property type="entry name" value="Glucan_biosyn_MdoG_C"/>
</dbReference>
<dbReference type="InterPro" id="IPR013783">
    <property type="entry name" value="Ig-like_fold"/>
</dbReference>
<dbReference type="InterPro" id="IPR014756">
    <property type="entry name" value="Ig_E-set"/>
</dbReference>
<dbReference type="InterPro" id="IPR023704">
    <property type="entry name" value="MdoG_OpgG"/>
</dbReference>
<dbReference type="PANTHER" id="PTHR30504">
    <property type="entry name" value="GLUCANS BIOSYNTHESIS PROTEIN"/>
    <property type="match status" value="1"/>
</dbReference>
<dbReference type="PANTHER" id="PTHR30504:SF4">
    <property type="entry name" value="GLUCANS BIOSYNTHESIS PROTEIN G"/>
    <property type="match status" value="1"/>
</dbReference>
<dbReference type="Pfam" id="PF04349">
    <property type="entry name" value="MdoG"/>
    <property type="match status" value="1"/>
</dbReference>
<dbReference type="PIRSF" id="PIRSF006281">
    <property type="entry name" value="MdoG"/>
    <property type="match status" value="1"/>
</dbReference>
<dbReference type="SUPFAM" id="SSF81296">
    <property type="entry name" value="E set domains"/>
    <property type="match status" value="1"/>
</dbReference>
<dbReference type="SUPFAM" id="SSF74650">
    <property type="entry name" value="Galactose mutarotase-like"/>
    <property type="match status" value="1"/>
</dbReference>
<name>OPGG_PSEAE</name>
<proteinExistence type="inferred from homology"/>
<feature type="signal peptide" evidence="2">
    <location>
        <begin position="1"/>
        <end position="35"/>
    </location>
</feature>
<feature type="chain" id="PRO_0000020226" description="Glucans biosynthesis protein G">
    <location>
        <begin position="36"/>
        <end position="525"/>
    </location>
</feature>
<accession>Q9HUA5</accession>